<accession>Q9BGI2</accession>
<accession>Q32L06</accession>
<reference key="1">
    <citation type="submission" date="2000-09" db="EMBL/GenBank/DDBJ databases">
        <title>Cloning of 4 new bovine peroxiredoxins, and screening of the complete peroxiredoxin family in different bovine tissues.</title>
        <authorList>
            <person name="Leyens G."/>
            <person name="Donnay I."/>
            <person name="Knoops B."/>
        </authorList>
    </citation>
    <scope>NUCLEOTIDE SEQUENCE [MRNA]</scope>
    <source>
        <tissue>Liver</tissue>
    </source>
</reference>
<reference key="2">
    <citation type="submission" date="2005-11" db="EMBL/GenBank/DDBJ databases">
        <authorList>
            <consortium name="NIH - Mammalian Gene Collection (MGC) project"/>
        </authorList>
    </citation>
    <scope>NUCLEOTIDE SEQUENCE [LARGE SCALE MRNA]</scope>
    <source>
        <strain>Crossbred X Angus</strain>
        <tissue>Liver</tissue>
    </source>
</reference>
<proteinExistence type="evidence at transcript level"/>
<feature type="signal peptide" evidence="1">
    <location>
        <begin position="1"/>
        <end position="40"/>
    </location>
</feature>
<feature type="chain" id="PRO_0000135097" description="Peroxiredoxin-4">
    <location>
        <begin position="41"/>
        <end position="274"/>
    </location>
</feature>
<feature type="domain" description="Thioredoxin" evidence="3">
    <location>
        <begin position="82"/>
        <end position="240"/>
    </location>
</feature>
<feature type="active site" description="Cysteine sulfenic acid (-SOH) intermediate" evidence="2">
    <location>
        <position position="127"/>
    </location>
</feature>
<feature type="disulfide bond" description="Interchain (with C-248); in linked form" evidence="2">
    <location>
        <position position="127"/>
    </location>
</feature>
<feature type="disulfide bond" description="Interchain (with C-127); in linked form" evidence="2">
    <location>
        <position position="248"/>
    </location>
</feature>
<protein>
    <recommendedName>
        <fullName>Peroxiredoxin-4</fullName>
        <ecNumber evidence="2">1.11.1.24</ecNumber>
    </recommendedName>
    <alternativeName>
        <fullName>Peroxiredoxin IV</fullName>
        <shortName>Prx-IV</shortName>
    </alternativeName>
    <alternativeName>
        <fullName evidence="4">Thioredoxin-dependent peroxiredoxin 4</fullName>
    </alternativeName>
</protein>
<dbReference type="EC" id="1.11.1.24" evidence="2"/>
<dbReference type="EMBL" id="AF305563">
    <property type="protein sequence ID" value="AAG53660.1"/>
    <property type="molecule type" value="mRNA"/>
</dbReference>
<dbReference type="EMBL" id="BC109824">
    <property type="protein sequence ID" value="AAI09825.1"/>
    <property type="molecule type" value="mRNA"/>
</dbReference>
<dbReference type="RefSeq" id="NP_776858.1">
    <property type="nucleotide sequence ID" value="NM_174433.2"/>
</dbReference>
<dbReference type="SMR" id="Q9BGI2"/>
<dbReference type="BioGRID" id="159288">
    <property type="interactions" value="1"/>
</dbReference>
<dbReference type="FunCoup" id="Q9BGI2">
    <property type="interactions" value="1457"/>
</dbReference>
<dbReference type="STRING" id="9913.ENSBTAP00000008107"/>
<dbReference type="PeroxiBase" id="4531">
    <property type="entry name" value="Bt2CysPrx04"/>
</dbReference>
<dbReference type="PaxDb" id="9913-ENSBTAP00000008107"/>
<dbReference type="PeptideAtlas" id="Q9BGI2"/>
<dbReference type="Ensembl" id="ENSBTAT00000008107.4">
    <property type="protein sequence ID" value="ENSBTAP00000008107.4"/>
    <property type="gene ID" value="ENSBTAG00000006165.4"/>
</dbReference>
<dbReference type="GeneID" id="281999"/>
<dbReference type="KEGG" id="bta:281999"/>
<dbReference type="CTD" id="10549"/>
<dbReference type="VGNC" id="VGNC:33302">
    <property type="gene designation" value="PRDX4"/>
</dbReference>
<dbReference type="eggNOG" id="KOG0852">
    <property type="taxonomic scope" value="Eukaryota"/>
</dbReference>
<dbReference type="GeneTree" id="ENSGT00940000153430"/>
<dbReference type="HOGENOM" id="CLU_042529_21_1_1"/>
<dbReference type="InParanoid" id="Q9BGI2"/>
<dbReference type="OrthoDB" id="185659at2759"/>
<dbReference type="TreeFam" id="TF105181"/>
<dbReference type="Proteomes" id="UP000009136">
    <property type="component" value="Chromosome X"/>
</dbReference>
<dbReference type="GO" id="GO:0005829">
    <property type="term" value="C:cytosol"/>
    <property type="evidence" value="ECO:0000318"/>
    <property type="project" value="GO_Central"/>
</dbReference>
<dbReference type="GO" id="GO:0005783">
    <property type="term" value="C:endoplasmic reticulum"/>
    <property type="evidence" value="ECO:0000318"/>
    <property type="project" value="GO_Central"/>
</dbReference>
<dbReference type="GO" id="GO:0008379">
    <property type="term" value="F:thioredoxin peroxidase activity"/>
    <property type="evidence" value="ECO:0000318"/>
    <property type="project" value="GO_Central"/>
</dbReference>
<dbReference type="GO" id="GO:0045454">
    <property type="term" value="P:cell redox homeostasis"/>
    <property type="evidence" value="ECO:0000318"/>
    <property type="project" value="GO_Central"/>
</dbReference>
<dbReference type="GO" id="GO:0042744">
    <property type="term" value="P:hydrogen peroxide catabolic process"/>
    <property type="evidence" value="ECO:0000318"/>
    <property type="project" value="GO_Central"/>
</dbReference>
<dbReference type="GO" id="GO:0006979">
    <property type="term" value="P:response to oxidative stress"/>
    <property type="evidence" value="ECO:0000318"/>
    <property type="project" value="GO_Central"/>
</dbReference>
<dbReference type="CDD" id="cd03015">
    <property type="entry name" value="PRX_Typ2cys"/>
    <property type="match status" value="1"/>
</dbReference>
<dbReference type="FunFam" id="3.40.30.10:FF:000003">
    <property type="entry name" value="Peroxiredoxin 1"/>
    <property type="match status" value="1"/>
</dbReference>
<dbReference type="Gene3D" id="3.40.30.10">
    <property type="entry name" value="Glutaredoxin"/>
    <property type="match status" value="1"/>
</dbReference>
<dbReference type="InterPro" id="IPR000866">
    <property type="entry name" value="AhpC/TSA"/>
</dbReference>
<dbReference type="InterPro" id="IPR050217">
    <property type="entry name" value="Peroxiredoxin"/>
</dbReference>
<dbReference type="InterPro" id="IPR019479">
    <property type="entry name" value="Peroxiredoxin_C"/>
</dbReference>
<dbReference type="InterPro" id="IPR036249">
    <property type="entry name" value="Thioredoxin-like_sf"/>
</dbReference>
<dbReference type="InterPro" id="IPR013766">
    <property type="entry name" value="Thioredoxin_domain"/>
</dbReference>
<dbReference type="PANTHER" id="PTHR10681:SF173">
    <property type="entry name" value="PEROXIREDOXIN-4"/>
    <property type="match status" value="1"/>
</dbReference>
<dbReference type="PANTHER" id="PTHR10681">
    <property type="entry name" value="THIOREDOXIN PEROXIDASE"/>
    <property type="match status" value="1"/>
</dbReference>
<dbReference type="Pfam" id="PF10417">
    <property type="entry name" value="1-cysPrx_C"/>
    <property type="match status" value="1"/>
</dbReference>
<dbReference type="Pfam" id="PF00578">
    <property type="entry name" value="AhpC-TSA"/>
    <property type="match status" value="1"/>
</dbReference>
<dbReference type="SUPFAM" id="SSF52833">
    <property type="entry name" value="Thioredoxin-like"/>
    <property type="match status" value="1"/>
</dbReference>
<dbReference type="PROSITE" id="PS51352">
    <property type="entry name" value="THIOREDOXIN_2"/>
    <property type="match status" value="1"/>
</dbReference>
<name>PRDX4_BOVIN</name>
<evidence type="ECO:0000250" key="1"/>
<evidence type="ECO:0000250" key="2">
    <source>
        <dbReference type="UniProtKB" id="Q13162"/>
    </source>
</evidence>
<evidence type="ECO:0000255" key="3">
    <source>
        <dbReference type="PROSITE-ProRule" id="PRU00691"/>
    </source>
</evidence>
<evidence type="ECO:0000305" key="4"/>
<organism>
    <name type="scientific">Bos taurus</name>
    <name type="common">Bovine</name>
    <dbReference type="NCBI Taxonomy" id="9913"/>
    <lineage>
        <taxon>Eukaryota</taxon>
        <taxon>Metazoa</taxon>
        <taxon>Chordata</taxon>
        <taxon>Craniata</taxon>
        <taxon>Vertebrata</taxon>
        <taxon>Euteleostomi</taxon>
        <taxon>Mammalia</taxon>
        <taxon>Eutheria</taxon>
        <taxon>Laurasiatheria</taxon>
        <taxon>Artiodactyla</taxon>
        <taxon>Ruminantia</taxon>
        <taxon>Pecora</taxon>
        <taxon>Bovidae</taxon>
        <taxon>Bovinae</taxon>
        <taxon>Bos</taxon>
    </lineage>
</organism>
<keyword id="KW-0049">Antioxidant</keyword>
<keyword id="KW-0963">Cytoplasm</keyword>
<keyword id="KW-1015">Disulfide bond</keyword>
<keyword id="KW-0256">Endoplasmic reticulum</keyword>
<keyword id="KW-0560">Oxidoreductase</keyword>
<keyword id="KW-0575">Peroxidase</keyword>
<keyword id="KW-0676">Redox-active center</keyword>
<keyword id="KW-1185">Reference proteome</keyword>
<keyword id="KW-0732">Signal</keyword>
<gene>
    <name type="primary">PRDX4</name>
</gene>
<sequence>MEAPPPPPPLPATTLAPGRSRKLLLLPLLLFLLRAEAVRGFEAEERPRTREEECHFYAGGQVYPGEVSRVSVAEHSLHLSKAKISKPAPYWEGTAVINGEFKELKLTDYRGKYLVFFFYPLDFTFVCPTEIIAFGDRIDEFRSINTEVVACSVDSQFTHLAWINTPRRQGGLGSINIPLLADLNHQISKDYGVYLEDSGHTLRGLFIIDDKGILRQITLNDLPVGRSVDETLRLVQAFQYTDKHGEVCPAGWKPGSETIIPDPAGKLKYFDKLN</sequence>
<comment type="function">
    <text evidence="2">Thiol-specific peroxidase that catalyzes the reduction of hydrogen peroxide and organic hydroperoxides to water and alcohols, respectively. Plays a role in cell protection against oxidative stress by detoxifying peroxides and as sensor of hydrogen peroxide-mediated signaling events. Regulates the activation of NF-kappa-B in the cytosol by a modulation of I-kappa-B-alpha phosphorylation.</text>
</comment>
<comment type="catalytic activity">
    <reaction evidence="2">
        <text>a hydroperoxide + [thioredoxin]-dithiol = an alcohol + [thioredoxin]-disulfide + H2O</text>
        <dbReference type="Rhea" id="RHEA:62620"/>
        <dbReference type="Rhea" id="RHEA-COMP:10698"/>
        <dbReference type="Rhea" id="RHEA-COMP:10700"/>
        <dbReference type="ChEBI" id="CHEBI:15377"/>
        <dbReference type="ChEBI" id="CHEBI:29950"/>
        <dbReference type="ChEBI" id="CHEBI:30879"/>
        <dbReference type="ChEBI" id="CHEBI:35924"/>
        <dbReference type="ChEBI" id="CHEBI:50058"/>
        <dbReference type="EC" id="1.11.1.24"/>
    </reaction>
</comment>
<comment type="subunit">
    <text evidence="2">Homodimer; disulfide-linked, upon oxidation. 5 homodimers assemble to form a ring-like decamer.</text>
</comment>
<comment type="subcellular location">
    <subcellularLocation>
        <location evidence="2">Cytoplasm</location>
    </subcellularLocation>
    <subcellularLocation>
        <location evidence="2">Endoplasmic reticulum</location>
    </subcellularLocation>
</comment>
<comment type="PTM">
    <text evidence="2">The enzyme can be inactivated by further oxidation of the cysteine sulfenic acid (C(P)-SOH) to sulphinic acid (C(P)-SO2H) and sulphonic acid (C(P)-SO3H) instead of its condensation to a disulfide bond.</text>
</comment>
<comment type="miscellaneous">
    <text evidence="2">The active site is a conserved redox-active cysteine residue, the peroxidatic cysteine (C(P)), which makes the nucleophilic attack on the peroxide substrate. The peroxide oxidizes the C(P)-SH to cysteine sulfenic acid (C(P)-SOH), which then reacts with another cysteine residue, the resolving cysteine (C(R)), to form a disulfide bridge. The disulfide is subsequently reduced by an appropriate electron donor to complete the catalytic cycle. In this typical 2-Cys peroxiredoxin, C(R) is provided by the other dimeric subunit to form an intersubunit disulfide. The disulfide is subsequently reduced by thioredoxin.</text>
</comment>
<comment type="similarity">
    <text evidence="4">Belongs to the peroxiredoxin family. AhpC/Prx1 subfamily.</text>
</comment>